<gene>
    <name evidence="1" type="primary">dnaJ</name>
    <name type="ordered locus">Wbm0785</name>
</gene>
<feature type="chain" id="PRO_0000070936" description="Chaperone protein DnaJ">
    <location>
        <begin position="1"/>
        <end position="374"/>
    </location>
</feature>
<feature type="domain" description="J" evidence="1">
    <location>
        <begin position="5"/>
        <end position="70"/>
    </location>
</feature>
<feature type="repeat" description="CXXCXGXG motif">
    <location>
        <begin position="149"/>
        <end position="156"/>
    </location>
</feature>
<feature type="repeat" description="CXXCXGXG motif">
    <location>
        <begin position="166"/>
        <end position="173"/>
    </location>
</feature>
<feature type="repeat" description="CXXCXGXG motif">
    <location>
        <begin position="188"/>
        <end position="195"/>
    </location>
</feature>
<feature type="repeat" description="CXXCXGXG motif">
    <location>
        <begin position="202"/>
        <end position="209"/>
    </location>
</feature>
<feature type="zinc finger region" description="CR-type" evidence="1">
    <location>
        <begin position="136"/>
        <end position="214"/>
    </location>
</feature>
<feature type="binding site" evidence="1">
    <location>
        <position position="149"/>
    </location>
    <ligand>
        <name>Zn(2+)</name>
        <dbReference type="ChEBI" id="CHEBI:29105"/>
        <label>1</label>
    </ligand>
</feature>
<feature type="binding site" evidence="1">
    <location>
        <position position="152"/>
    </location>
    <ligand>
        <name>Zn(2+)</name>
        <dbReference type="ChEBI" id="CHEBI:29105"/>
        <label>1</label>
    </ligand>
</feature>
<feature type="binding site" evidence="1">
    <location>
        <position position="166"/>
    </location>
    <ligand>
        <name>Zn(2+)</name>
        <dbReference type="ChEBI" id="CHEBI:29105"/>
        <label>2</label>
    </ligand>
</feature>
<feature type="binding site" evidence="1">
    <location>
        <position position="169"/>
    </location>
    <ligand>
        <name>Zn(2+)</name>
        <dbReference type="ChEBI" id="CHEBI:29105"/>
        <label>2</label>
    </ligand>
</feature>
<feature type="binding site" evidence="1">
    <location>
        <position position="188"/>
    </location>
    <ligand>
        <name>Zn(2+)</name>
        <dbReference type="ChEBI" id="CHEBI:29105"/>
        <label>2</label>
    </ligand>
</feature>
<feature type="binding site" evidence="1">
    <location>
        <position position="191"/>
    </location>
    <ligand>
        <name>Zn(2+)</name>
        <dbReference type="ChEBI" id="CHEBI:29105"/>
        <label>2</label>
    </ligand>
</feature>
<feature type="binding site" evidence="1">
    <location>
        <position position="202"/>
    </location>
    <ligand>
        <name>Zn(2+)</name>
        <dbReference type="ChEBI" id="CHEBI:29105"/>
        <label>1</label>
    </ligand>
</feature>
<feature type="binding site" evidence="1">
    <location>
        <position position="205"/>
    </location>
    <ligand>
        <name>Zn(2+)</name>
        <dbReference type="ChEBI" id="CHEBI:29105"/>
        <label>1</label>
    </ligand>
</feature>
<protein>
    <recommendedName>
        <fullName evidence="1">Chaperone protein DnaJ</fullName>
    </recommendedName>
</protein>
<comment type="function">
    <text evidence="1">Participates actively in the response to hyperosmotic and heat shock by preventing the aggregation of stress-denatured proteins and by disaggregating proteins, also in an autonomous, DnaK-independent fashion. Unfolded proteins bind initially to DnaJ; upon interaction with the DnaJ-bound protein, DnaK hydrolyzes its bound ATP, resulting in the formation of a stable complex. GrpE releases ADP from DnaK; ATP binding to DnaK triggers the release of the substrate protein, thus completing the reaction cycle. Several rounds of ATP-dependent interactions between DnaJ, DnaK and GrpE are required for fully efficient folding. Also involved, together with DnaK and GrpE, in the DNA replication of plasmids through activation of initiation proteins.</text>
</comment>
<comment type="cofactor">
    <cofactor evidence="1">
        <name>Zn(2+)</name>
        <dbReference type="ChEBI" id="CHEBI:29105"/>
    </cofactor>
    <text evidence="1">Binds 2 Zn(2+) ions per monomer.</text>
</comment>
<comment type="subunit">
    <text evidence="1">Homodimer.</text>
</comment>
<comment type="subcellular location">
    <subcellularLocation>
        <location evidence="1">Cytoplasm</location>
    </subcellularLocation>
</comment>
<comment type="domain">
    <text evidence="1">The J domain is necessary and sufficient to stimulate DnaK ATPase activity. Zinc center 1 plays an important role in the autonomous, DnaK-independent chaperone activity of DnaJ. Zinc center 2 is essential for interaction with DnaK and for DnaJ activity.</text>
</comment>
<comment type="similarity">
    <text evidence="1">Belongs to the DnaJ family.</text>
</comment>
<keyword id="KW-0143">Chaperone</keyword>
<keyword id="KW-0963">Cytoplasm</keyword>
<keyword id="KW-0235">DNA replication</keyword>
<keyword id="KW-0479">Metal-binding</keyword>
<keyword id="KW-1185">Reference proteome</keyword>
<keyword id="KW-0677">Repeat</keyword>
<keyword id="KW-0346">Stress response</keyword>
<keyword id="KW-0862">Zinc</keyword>
<keyword id="KW-0863">Zinc-finger</keyword>
<reference key="1">
    <citation type="journal article" date="2005" name="PLoS Biol.">
        <title>The Wolbachia genome of Brugia malayi: endosymbiont evolution within a human pathogenic nematode.</title>
        <authorList>
            <person name="Foster J."/>
            <person name="Ganatra M."/>
            <person name="Kamal I."/>
            <person name="Ware J."/>
            <person name="Makarova K."/>
            <person name="Ivanova N."/>
            <person name="Bhattacharyya A."/>
            <person name="Kapatral V."/>
            <person name="Kumar S."/>
            <person name="Posfai J."/>
            <person name="Vincze T."/>
            <person name="Ingram J."/>
            <person name="Moran L."/>
            <person name="Lapidus A."/>
            <person name="Omelchenko M."/>
            <person name="Kyrpides N."/>
            <person name="Ghedin E."/>
            <person name="Wang S."/>
            <person name="Goltsman E."/>
            <person name="Joukov V."/>
            <person name="Ostrovskaya O."/>
            <person name="Tsukerman K."/>
            <person name="Mazur M."/>
            <person name="Comb D."/>
            <person name="Koonin E."/>
            <person name="Slatko B."/>
        </authorList>
    </citation>
    <scope>NUCLEOTIDE SEQUENCE [LARGE SCALE GENOMIC DNA]</scope>
    <source>
        <strain>TRS</strain>
    </source>
</reference>
<name>DNAJ_WOLTR</name>
<evidence type="ECO:0000255" key="1">
    <source>
        <dbReference type="HAMAP-Rule" id="MF_01152"/>
    </source>
</evidence>
<dbReference type="EMBL" id="AE017321">
    <property type="protein sequence ID" value="AAW71373.1"/>
    <property type="molecule type" value="Genomic_DNA"/>
</dbReference>
<dbReference type="RefSeq" id="WP_011256982.1">
    <property type="nucleotide sequence ID" value="NC_006833.1"/>
</dbReference>
<dbReference type="SMR" id="Q5GRK1"/>
<dbReference type="STRING" id="292805.Wbm0785"/>
<dbReference type="KEGG" id="wbm:Wbm0785"/>
<dbReference type="eggNOG" id="COG0484">
    <property type="taxonomic scope" value="Bacteria"/>
</dbReference>
<dbReference type="HOGENOM" id="CLU_017633_0_7_5"/>
<dbReference type="Proteomes" id="UP000000534">
    <property type="component" value="Chromosome"/>
</dbReference>
<dbReference type="GO" id="GO:0005737">
    <property type="term" value="C:cytoplasm"/>
    <property type="evidence" value="ECO:0007669"/>
    <property type="project" value="UniProtKB-SubCell"/>
</dbReference>
<dbReference type="GO" id="GO:0005524">
    <property type="term" value="F:ATP binding"/>
    <property type="evidence" value="ECO:0007669"/>
    <property type="project" value="InterPro"/>
</dbReference>
<dbReference type="GO" id="GO:0031072">
    <property type="term" value="F:heat shock protein binding"/>
    <property type="evidence" value="ECO:0007669"/>
    <property type="project" value="InterPro"/>
</dbReference>
<dbReference type="GO" id="GO:0051082">
    <property type="term" value="F:unfolded protein binding"/>
    <property type="evidence" value="ECO:0007669"/>
    <property type="project" value="UniProtKB-UniRule"/>
</dbReference>
<dbReference type="GO" id="GO:0008270">
    <property type="term" value="F:zinc ion binding"/>
    <property type="evidence" value="ECO:0007669"/>
    <property type="project" value="UniProtKB-UniRule"/>
</dbReference>
<dbReference type="GO" id="GO:0051085">
    <property type="term" value="P:chaperone cofactor-dependent protein refolding"/>
    <property type="evidence" value="ECO:0007669"/>
    <property type="project" value="TreeGrafter"/>
</dbReference>
<dbReference type="GO" id="GO:0006260">
    <property type="term" value="P:DNA replication"/>
    <property type="evidence" value="ECO:0007669"/>
    <property type="project" value="UniProtKB-KW"/>
</dbReference>
<dbReference type="GO" id="GO:0042026">
    <property type="term" value="P:protein refolding"/>
    <property type="evidence" value="ECO:0007669"/>
    <property type="project" value="TreeGrafter"/>
</dbReference>
<dbReference type="GO" id="GO:0009408">
    <property type="term" value="P:response to heat"/>
    <property type="evidence" value="ECO:0007669"/>
    <property type="project" value="InterPro"/>
</dbReference>
<dbReference type="CDD" id="cd06257">
    <property type="entry name" value="DnaJ"/>
    <property type="match status" value="1"/>
</dbReference>
<dbReference type="CDD" id="cd10747">
    <property type="entry name" value="DnaJ_C"/>
    <property type="match status" value="1"/>
</dbReference>
<dbReference type="CDD" id="cd10719">
    <property type="entry name" value="DnaJ_zf"/>
    <property type="match status" value="1"/>
</dbReference>
<dbReference type="FunFam" id="1.10.287.110:FF:000034">
    <property type="entry name" value="Chaperone protein DnaJ"/>
    <property type="match status" value="1"/>
</dbReference>
<dbReference type="FunFam" id="2.60.260.20:FF:000005">
    <property type="entry name" value="Chaperone protein dnaJ 1, mitochondrial"/>
    <property type="match status" value="1"/>
</dbReference>
<dbReference type="FunFam" id="2.10.230.10:FF:000002">
    <property type="entry name" value="Molecular chaperone DnaJ"/>
    <property type="match status" value="1"/>
</dbReference>
<dbReference type="Gene3D" id="1.10.287.110">
    <property type="entry name" value="DnaJ domain"/>
    <property type="match status" value="1"/>
</dbReference>
<dbReference type="Gene3D" id="2.10.230.10">
    <property type="entry name" value="Heat shock protein DnaJ, cysteine-rich domain"/>
    <property type="match status" value="1"/>
</dbReference>
<dbReference type="Gene3D" id="2.60.260.20">
    <property type="entry name" value="Urease metallochaperone UreE, N-terminal domain"/>
    <property type="match status" value="2"/>
</dbReference>
<dbReference type="HAMAP" id="MF_01152">
    <property type="entry name" value="DnaJ"/>
    <property type="match status" value="1"/>
</dbReference>
<dbReference type="InterPro" id="IPR012724">
    <property type="entry name" value="DnaJ"/>
</dbReference>
<dbReference type="InterPro" id="IPR002939">
    <property type="entry name" value="DnaJ_C"/>
</dbReference>
<dbReference type="InterPro" id="IPR001623">
    <property type="entry name" value="DnaJ_domain"/>
</dbReference>
<dbReference type="InterPro" id="IPR018253">
    <property type="entry name" value="DnaJ_domain_CS"/>
</dbReference>
<dbReference type="InterPro" id="IPR008971">
    <property type="entry name" value="HSP40/DnaJ_pept-bd"/>
</dbReference>
<dbReference type="InterPro" id="IPR001305">
    <property type="entry name" value="HSP_DnaJ_Cys-rich_dom"/>
</dbReference>
<dbReference type="InterPro" id="IPR036410">
    <property type="entry name" value="HSP_DnaJ_Cys-rich_dom_sf"/>
</dbReference>
<dbReference type="InterPro" id="IPR036869">
    <property type="entry name" value="J_dom_sf"/>
</dbReference>
<dbReference type="NCBIfam" id="TIGR02349">
    <property type="entry name" value="DnaJ_bact"/>
    <property type="match status" value="1"/>
</dbReference>
<dbReference type="NCBIfam" id="NF008035">
    <property type="entry name" value="PRK10767.1"/>
    <property type="match status" value="1"/>
</dbReference>
<dbReference type="PANTHER" id="PTHR43096:SF48">
    <property type="entry name" value="CHAPERONE PROTEIN DNAJ"/>
    <property type="match status" value="1"/>
</dbReference>
<dbReference type="PANTHER" id="PTHR43096">
    <property type="entry name" value="DNAJ HOMOLOG 1, MITOCHONDRIAL-RELATED"/>
    <property type="match status" value="1"/>
</dbReference>
<dbReference type="Pfam" id="PF00226">
    <property type="entry name" value="DnaJ"/>
    <property type="match status" value="1"/>
</dbReference>
<dbReference type="Pfam" id="PF01556">
    <property type="entry name" value="DnaJ_C"/>
    <property type="match status" value="1"/>
</dbReference>
<dbReference type="Pfam" id="PF00684">
    <property type="entry name" value="DnaJ_CXXCXGXG"/>
    <property type="match status" value="1"/>
</dbReference>
<dbReference type="PRINTS" id="PR00625">
    <property type="entry name" value="JDOMAIN"/>
</dbReference>
<dbReference type="SMART" id="SM00271">
    <property type="entry name" value="DnaJ"/>
    <property type="match status" value="1"/>
</dbReference>
<dbReference type="SUPFAM" id="SSF46565">
    <property type="entry name" value="Chaperone J-domain"/>
    <property type="match status" value="1"/>
</dbReference>
<dbReference type="SUPFAM" id="SSF57938">
    <property type="entry name" value="DnaJ/Hsp40 cysteine-rich domain"/>
    <property type="match status" value="1"/>
</dbReference>
<dbReference type="SUPFAM" id="SSF49493">
    <property type="entry name" value="HSP40/DnaJ peptide-binding domain"/>
    <property type="match status" value="2"/>
</dbReference>
<dbReference type="PROSITE" id="PS00636">
    <property type="entry name" value="DNAJ_1"/>
    <property type="match status" value="1"/>
</dbReference>
<dbReference type="PROSITE" id="PS50076">
    <property type="entry name" value="DNAJ_2"/>
    <property type="match status" value="1"/>
</dbReference>
<dbReference type="PROSITE" id="PS51188">
    <property type="entry name" value="ZF_CR"/>
    <property type="match status" value="1"/>
</dbReference>
<organism>
    <name type="scientific">Wolbachia sp. subsp. Brugia malayi (strain TRS)</name>
    <dbReference type="NCBI Taxonomy" id="292805"/>
    <lineage>
        <taxon>Bacteria</taxon>
        <taxon>Pseudomonadati</taxon>
        <taxon>Pseudomonadota</taxon>
        <taxon>Alphaproteobacteria</taxon>
        <taxon>Rickettsiales</taxon>
        <taxon>Anaplasmataceae</taxon>
        <taxon>Wolbachieae</taxon>
        <taxon>Wolbachia</taxon>
    </lineage>
</organism>
<proteinExistence type="inferred from homology"/>
<sequence length="374" mass="41265">MSKKDYYKLLGVDRNASTDEIKKAYKKLALKYHPDRNPGNKEAEEKFKEITAAYEVLSDSEKRAGYDRYGHEGASGGFDFSQGFGSAGDFSDIFNDFFGGEFGSSSRSKAKRSTTGVPGADLRYDLEITLEDAFKGIQAPIHYVTNVKCDMCQGRGSEGATKPVQCHTCQGSGRIRTQQGFFTIERTCTTCYGEGEIIQNKCKKCNGSGRRRDEVNISVSIPKGIEEGAKVRVSGKGEAGAKGGKSGDLYVYVKITPHKIFTRNKADLHCKVPIRMTLAVLGGEIDVQSIDGAKIKVKVPEGTQTSTKLRCKEKGMPYMNSYARGDLYVQIIVETLNPNNLTKKQIELLKALEEEENASIQQQSEGFFSKVKKK</sequence>
<accession>Q5GRK1</accession>